<accession>P39394</accession>
<accession>Q2M5W9</accession>
<name>SYME_ECOLI</name>
<protein>
    <recommendedName>
        <fullName>Toxic protein SymE</fullName>
    </recommendedName>
    <alternativeName>
        <fullName>Putative endoribonuclease SymE</fullName>
        <ecNumber>3.1.-.-</ecNumber>
    </alternativeName>
</protein>
<proteinExistence type="evidence at transcript level"/>
<reference key="1">
    <citation type="journal article" date="1995" name="Nucleic Acids Res.">
        <title>Analysis of the Escherichia coli genome VI: DNA sequence of the region from 92.8 through 100 minutes.</title>
        <authorList>
            <person name="Burland V.D."/>
            <person name="Plunkett G. III"/>
            <person name="Sofia H.J."/>
            <person name="Daniels D.L."/>
            <person name="Blattner F.R."/>
        </authorList>
    </citation>
    <scope>NUCLEOTIDE SEQUENCE [LARGE SCALE GENOMIC DNA]</scope>
    <source>
        <strain>K12 / MG1655 / ATCC 47076</strain>
    </source>
</reference>
<reference key="2">
    <citation type="journal article" date="1997" name="Science">
        <title>The complete genome sequence of Escherichia coli K-12.</title>
        <authorList>
            <person name="Blattner F.R."/>
            <person name="Plunkett G. III"/>
            <person name="Bloch C.A."/>
            <person name="Perna N.T."/>
            <person name="Burland V."/>
            <person name="Riley M."/>
            <person name="Collado-Vides J."/>
            <person name="Glasner J.D."/>
            <person name="Rode C.K."/>
            <person name="Mayhew G.F."/>
            <person name="Gregor J."/>
            <person name="Davis N.W."/>
            <person name="Kirkpatrick H.A."/>
            <person name="Goeden M.A."/>
            <person name="Rose D.J."/>
            <person name="Mau B."/>
            <person name="Shao Y."/>
        </authorList>
    </citation>
    <scope>NUCLEOTIDE SEQUENCE [LARGE SCALE GENOMIC DNA]</scope>
    <source>
        <strain>K12 / MG1655 / ATCC 47076</strain>
    </source>
</reference>
<reference key="3">
    <citation type="journal article" date="2006" name="Mol. Syst. Biol.">
        <title>Highly accurate genome sequences of Escherichia coli K-12 strains MG1655 and W3110.</title>
        <authorList>
            <person name="Hayashi K."/>
            <person name="Morooka N."/>
            <person name="Yamamoto Y."/>
            <person name="Fujita K."/>
            <person name="Isono K."/>
            <person name="Choi S."/>
            <person name="Ohtsubo E."/>
            <person name="Baba T."/>
            <person name="Wanner B.L."/>
            <person name="Mori H."/>
            <person name="Horiuchi T."/>
        </authorList>
    </citation>
    <scope>NUCLEOTIDE SEQUENCE [LARGE SCALE GENOMIC DNA]</scope>
    <source>
        <strain>K12 / W3110 / ATCC 27325 / DSM 5911</strain>
    </source>
</reference>
<reference key="4">
    <citation type="journal article" date="2000" name="Mol. Microbiol.">
        <title>Identification of additional genes belonging to the LexA regulon in Escherichia coli.</title>
        <authorList>
            <person name="Fernandez De Henestrosa A.R."/>
            <person name="Ogi T."/>
            <person name="Aoyagi S."/>
            <person name="Chafin D."/>
            <person name="Hayes J.J."/>
            <person name="Ohmori H."/>
            <person name="Woodgate R."/>
        </authorList>
    </citation>
    <scope>REGULATION BY LEXA</scope>
    <scope>INDUCTION</scope>
    <source>
        <strain>K12 / RW118</strain>
    </source>
</reference>
<reference key="5">
    <citation type="journal article" date="2007" name="Mol. Microbiol.">
        <title>An antisense RNA controls synthesis of an SOS-induced toxin evolved from an antitoxin.</title>
        <authorList>
            <person name="Kawano M."/>
            <person name="Aravind L."/>
            <person name="Storz G."/>
        </authorList>
    </citation>
    <scope>FUNCTION</scope>
    <scope>INDUCTION</scope>
    <source>
        <strain>K12 / MG1655 / ATCC 47076</strain>
    </source>
</reference>
<feature type="chain" id="PRO_0000169799" description="Toxic protein SymE">
    <location>
        <begin position="1"/>
        <end position="113"/>
    </location>
</feature>
<feature type="domain" description="SpoVT-AbrB" evidence="1">
    <location>
        <begin position="29"/>
        <end position="74"/>
    </location>
</feature>
<keyword id="KW-0963">Cytoplasm</keyword>
<keyword id="KW-0238">DNA-binding</keyword>
<keyword id="KW-0255">Endonuclease</keyword>
<keyword id="KW-0378">Hydrolase</keyword>
<keyword id="KW-0540">Nuclease</keyword>
<keyword id="KW-1185">Reference proteome</keyword>
<keyword id="KW-0694">RNA-binding</keyword>
<keyword id="KW-1277">Toxin-antitoxin system</keyword>
<comment type="function">
    <text evidence="3">Toxic component of a type I toxin-antitoxin (TA) system (PubMed:17462020). Involved in the degradation and recycling of damaged RNA (PubMed:17462020). It is itself a target for degradation by the ATP-dependent protease Lon (PubMed:17462020).</text>
</comment>
<comment type="subcellular location">
    <subcellularLocation>
        <location evidence="5">Cytoplasm</location>
    </subcellularLocation>
    <text evidence="3">Purifies with ribosomes.</text>
</comment>
<comment type="induction">
    <text evidence="2 3">Repressed by LexA, induced by DNA damage (PubMed:10760155, PubMed:17462020). During the SOS response (at protein level when expressed as a fusion protein) (PubMed:17462020). The mRNA stability and translation is controlled by the small regulatory RNA symR, which probably blocks ribosome binding (PubMed:17462020). Expression of the proteinaceous toxin (putative endonuclease) is controlled by antisense sRNA SymR (PubMed:17462020).</text>
</comment>
<comment type="miscellaneous">
    <text evidence="3">Overexpression of this protein is toxic for the cell, affecting colony-forming ability and protein synthesis.</text>
</comment>
<comment type="similarity">
    <text evidence="4">Belongs to the SymE family.</text>
</comment>
<comment type="sequence caution" evidence="4">
    <conflict type="erroneous initiation">
        <sequence resource="EMBL-CDS" id="AAA97244"/>
    </conflict>
    <text>Extended N-terminus.</text>
</comment>
<comment type="sequence caution" evidence="4">
    <conflict type="erroneous initiation">
        <sequence resource="EMBL-CDS" id="BAE78337"/>
    </conflict>
    <text>Extended N-terminus.</text>
</comment>
<gene>
    <name type="primary">symE</name>
    <name type="synonym">dinL</name>
    <name type="synonym">sosC</name>
    <name type="synonym">yjiW</name>
    <name type="ordered locus">b4347</name>
    <name type="ordered locus">JW4310</name>
</gene>
<organism>
    <name type="scientific">Escherichia coli (strain K12)</name>
    <dbReference type="NCBI Taxonomy" id="83333"/>
    <lineage>
        <taxon>Bacteria</taxon>
        <taxon>Pseudomonadati</taxon>
        <taxon>Pseudomonadota</taxon>
        <taxon>Gammaproteobacteria</taxon>
        <taxon>Enterobacterales</taxon>
        <taxon>Enterobacteriaceae</taxon>
        <taxon>Escherichia</taxon>
    </lineage>
</organism>
<evidence type="ECO:0000255" key="1">
    <source>
        <dbReference type="PROSITE-ProRule" id="PRU01076"/>
    </source>
</evidence>
<evidence type="ECO:0000269" key="2">
    <source>
    </source>
</evidence>
<evidence type="ECO:0000269" key="3">
    <source>
    </source>
</evidence>
<evidence type="ECO:0000305" key="4"/>
<evidence type="ECO:0000305" key="5">
    <source>
    </source>
</evidence>
<dbReference type="EC" id="3.1.-.-"/>
<dbReference type="EMBL" id="U14003">
    <property type="protein sequence ID" value="AAA97244.1"/>
    <property type="status" value="ALT_INIT"/>
    <property type="molecule type" value="Genomic_DNA"/>
</dbReference>
<dbReference type="EMBL" id="U00096">
    <property type="protein sequence ID" value="AAC77303.2"/>
    <property type="molecule type" value="Genomic_DNA"/>
</dbReference>
<dbReference type="EMBL" id="AP009048">
    <property type="protein sequence ID" value="BAE78337.1"/>
    <property type="status" value="ALT_INIT"/>
    <property type="molecule type" value="Genomic_DNA"/>
</dbReference>
<dbReference type="PIR" id="S56573">
    <property type="entry name" value="S56573"/>
</dbReference>
<dbReference type="RefSeq" id="NP_418767.4">
    <property type="nucleotide sequence ID" value="NC_000913.3"/>
</dbReference>
<dbReference type="RefSeq" id="WP_000132601.1">
    <property type="nucleotide sequence ID" value="NZ_LN832404.1"/>
</dbReference>
<dbReference type="BioGRID" id="4262766">
    <property type="interactions" value="164"/>
</dbReference>
<dbReference type="FunCoup" id="P39394">
    <property type="interactions" value="148"/>
</dbReference>
<dbReference type="STRING" id="511145.b4347"/>
<dbReference type="PaxDb" id="511145-b4347"/>
<dbReference type="EnsemblBacteria" id="AAC77303">
    <property type="protein sequence ID" value="AAC77303"/>
    <property type="gene ID" value="b4347"/>
</dbReference>
<dbReference type="GeneID" id="949088"/>
<dbReference type="KEGG" id="ecj:JW4310"/>
<dbReference type="KEGG" id="eco:b4347"/>
<dbReference type="KEGG" id="ecoc:C3026_23485"/>
<dbReference type="PATRIC" id="fig|1411691.4.peg.2339"/>
<dbReference type="EchoBASE" id="EB2470"/>
<dbReference type="eggNOG" id="ENOG5031VID">
    <property type="taxonomic scope" value="Bacteria"/>
</dbReference>
<dbReference type="HOGENOM" id="CLU_151239_0_0_6"/>
<dbReference type="InParanoid" id="P39394"/>
<dbReference type="OMA" id="MRQHTRT"/>
<dbReference type="OrthoDB" id="6053337at2"/>
<dbReference type="PhylomeDB" id="P39394"/>
<dbReference type="BioCyc" id="EcoCyc:G7940-MONOMER"/>
<dbReference type="PRO" id="PR:P39394"/>
<dbReference type="Proteomes" id="UP000000625">
    <property type="component" value="Chromosome"/>
</dbReference>
<dbReference type="GO" id="GO:0043590">
    <property type="term" value="C:bacterial nucleoid"/>
    <property type="evidence" value="ECO:0007669"/>
    <property type="project" value="GOC"/>
</dbReference>
<dbReference type="GO" id="GO:0005737">
    <property type="term" value="C:cytoplasm"/>
    <property type="evidence" value="ECO:0007669"/>
    <property type="project" value="UniProtKB-SubCell"/>
</dbReference>
<dbReference type="GO" id="GO:0003677">
    <property type="term" value="F:DNA binding"/>
    <property type="evidence" value="ECO:0000314"/>
    <property type="project" value="EcoCyc"/>
</dbReference>
<dbReference type="GO" id="GO:0042802">
    <property type="term" value="F:identical protein binding"/>
    <property type="evidence" value="ECO:0000314"/>
    <property type="project" value="EcoCyc"/>
</dbReference>
<dbReference type="GO" id="GO:0003723">
    <property type="term" value="F:RNA binding"/>
    <property type="evidence" value="ECO:0007669"/>
    <property type="project" value="UniProtKB-KW"/>
</dbReference>
<dbReference type="GO" id="GO:0004521">
    <property type="term" value="F:RNA endonuclease activity"/>
    <property type="evidence" value="ECO:0007669"/>
    <property type="project" value="UniProtKB-UniRule"/>
</dbReference>
<dbReference type="GO" id="GO:0036386">
    <property type="term" value="P:bacterial nucleoid packaging"/>
    <property type="evidence" value="ECO:0000315"/>
    <property type="project" value="EcoCyc"/>
</dbReference>
<dbReference type="GO" id="GO:0006974">
    <property type="term" value="P:DNA damage response"/>
    <property type="evidence" value="ECO:0000270"/>
    <property type="project" value="EcoliWiki"/>
</dbReference>
<dbReference type="GO" id="GO:0090143">
    <property type="term" value="P:nucleoid organization"/>
    <property type="evidence" value="ECO:0000315"/>
    <property type="project" value="EcoCyc"/>
</dbReference>
<dbReference type="GO" id="GO:0016070">
    <property type="term" value="P:RNA metabolic process"/>
    <property type="evidence" value="ECO:0007669"/>
    <property type="project" value="InterPro"/>
</dbReference>
<dbReference type="GO" id="GO:0009432">
    <property type="term" value="P:SOS response"/>
    <property type="evidence" value="ECO:0000270"/>
    <property type="project" value="EcoCyc"/>
</dbReference>
<dbReference type="HAMAP" id="MF_01193">
    <property type="entry name" value="Endoribonucl_SymE"/>
    <property type="match status" value="1"/>
</dbReference>
<dbReference type="InterPro" id="IPR007159">
    <property type="entry name" value="SpoVT-AbrB_dom"/>
</dbReference>
<dbReference type="InterPro" id="IPR014944">
    <property type="entry name" value="Toxin_SymE-like"/>
</dbReference>
<dbReference type="InterPro" id="IPR020883">
    <property type="entry name" value="TypeI_TA_SymE"/>
</dbReference>
<dbReference type="NCBIfam" id="NF010128">
    <property type="entry name" value="PRK13605.1"/>
    <property type="match status" value="1"/>
</dbReference>
<dbReference type="Pfam" id="PF08845">
    <property type="entry name" value="SymE_toxin"/>
    <property type="match status" value="1"/>
</dbReference>
<dbReference type="PROSITE" id="PS51740">
    <property type="entry name" value="SPOVT_ABRB"/>
    <property type="match status" value="1"/>
</dbReference>
<sequence length="113" mass="12203">MTDTHSIAQPFEAEVSPANNRHVTVGYASRYPDYSRIPAITLKGQWLEAAGFATGTAVDVKVMEGCIVLTAQPPAAEESELMQSLRQVCKLSARKQKQVQAFIGVIAGKQKVA</sequence>